<keyword id="KW-0030">Aminoacyl-tRNA synthetase</keyword>
<keyword id="KW-0067">ATP-binding</keyword>
<keyword id="KW-0963">Cytoplasm</keyword>
<keyword id="KW-0436">Ligase</keyword>
<keyword id="KW-0479">Metal-binding</keyword>
<keyword id="KW-0547">Nucleotide-binding</keyword>
<keyword id="KW-0648">Protein biosynthesis</keyword>
<keyword id="KW-0862">Zinc</keyword>
<accession>A5F763</accession>
<accession>C3M1P0</accession>
<protein>
    <recommendedName>
        <fullName evidence="1">Cysteine--tRNA ligase</fullName>
        <ecNumber evidence="1">6.1.1.16</ecNumber>
    </recommendedName>
    <alternativeName>
        <fullName evidence="1">Cysteinyl-tRNA synthetase</fullName>
        <shortName evidence="1">CysRS</shortName>
    </alternativeName>
</protein>
<evidence type="ECO:0000255" key="1">
    <source>
        <dbReference type="HAMAP-Rule" id="MF_00041"/>
    </source>
</evidence>
<proteinExistence type="inferred from homology"/>
<gene>
    <name evidence="1" type="primary">cysS</name>
    <name type="ordered locus">VC0395_A1439</name>
    <name type="ordered locus">VC395_1963</name>
</gene>
<reference key="1">
    <citation type="submission" date="2007-03" db="EMBL/GenBank/DDBJ databases">
        <authorList>
            <person name="Heidelberg J."/>
        </authorList>
    </citation>
    <scope>NUCLEOTIDE SEQUENCE [LARGE SCALE GENOMIC DNA]</scope>
    <source>
        <strain>ATCC 39541 / Classical Ogawa 395 / O395</strain>
    </source>
</reference>
<reference key="2">
    <citation type="journal article" date="2008" name="PLoS ONE">
        <title>A recalibrated molecular clock and independent origins for the cholera pandemic clones.</title>
        <authorList>
            <person name="Feng L."/>
            <person name="Reeves P.R."/>
            <person name="Lan R."/>
            <person name="Ren Y."/>
            <person name="Gao C."/>
            <person name="Zhou Z."/>
            <person name="Ren Y."/>
            <person name="Cheng J."/>
            <person name="Wang W."/>
            <person name="Wang J."/>
            <person name="Qian W."/>
            <person name="Li D."/>
            <person name="Wang L."/>
        </authorList>
    </citation>
    <scope>NUCLEOTIDE SEQUENCE [LARGE SCALE GENOMIC DNA]</scope>
    <source>
        <strain>ATCC 39541 / Classical Ogawa 395 / O395</strain>
    </source>
</reference>
<feature type="chain" id="PRO_0000332913" description="Cysteine--tRNA ligase">
    <location>
        <begin position="1"/>
        <end position="459"/>
    </location>
</feature>
<feature type="short sequence motif" description="'HIGH' region">
    <location>
        <begin position="30"/>
        <end position="40"/>
    </location>
</feature>
<feature type="short sequence motif" description="'KMSKS' region">
    <location>
        <begin position="266"/>
        <end position="270"/>
    </location>
</feature>
<feature type="binding site" evidence="1">
    <location>
        <position position="28"/>
    </location>
    <ligand>
        <name>Zn(2+)</name>
        <dbReference type="ChEBI" id="CHEBI:29105"/>
    </ligand>
</feature>
<feature type="binding site" evidence="1">
    <location>
        <position position="209"/>
    </location>
    <ligand>
        <name>Zn(2+)</name>
        <dbReference type="ChEBI" id="CHEBI:29105"/>
    </ligand>
</feature>
<feature type="binding site" evidence="1">
    <location>
        <position position="234"/>
    </location>
    <ligand>
        <name>Zn(2+)</name>
        <dbReference type="ChEBI" id="CHEBI:29105"/>
    </ligand>
</feature>
<feature type="binding site" evidence="1">
    <location>
        <position position="238"/>
    </location>
    <ligand>
        <name>Zn(2+)</name>
        <dbReference type="ChEBI" id="CHEBI:29105"/>
    </ligand>
</feature>
<feature type="binding site" evidence="1">
    <location>
        <position position="269"/>
    </location>
    <ligand>
        <name>ATP</name>
        <dbReference type="ChEBI" id="CHEBI:30616"/>
    </ligand>
</feature>
<organism>
    <name type="scientific">Vibrio cholerae serotype O1 (strain ATCC 39541 / Classical Ogawa 395 / O395)</name>
    <dbReference type="NCBI Taxonomy" id="345073"/>
    <lineage>
        <taxon>Bacteria</taxon>
        <taxon>Pseudomonadati</taxon>
        <taxon>Pseudomonadota</taxon>
        <taxon>Gammaproteobacteria</taxon>
        <taxon>Vibrionales</taxon>
        <taxon>Vibrionaceae</taxon>
        <taxon>Vibrio</taxon>
    </lineage>
</organism>
<comment type="catalytic activity">
    <reaction evidence="1">
        <text>tRNA(Cys) + L-cysteine + ATP = L-cysteinyl-tRNA(Cys) + AMP + diphosphate</text>
        <dbReference type="Rhea" id="RHEA:17773"/>
        <dbReference type="Rhea" id="RHEA-COMP:9661"/>
        <dbReference type="Rhea" id="RHEA-COMP:9679"/>
        <dbReference type="ChEBI" id="CHEBI:30616"/>
        <dbReference type="ChEBI" id="CHEBI:33019"/>
        <dbReference type="ChEBI" id="CHEBI:35235"/>
        <dbReference type="ChEBI" id="CHEBI:78442"/>
        <dbReference type="ChEBI" id="CHEBI:78517"/>
        <dbReference type="ChEBI" id="CHEBI:456215"/>
        <dbReference type="EC" id="6.1.1.16"/>
    </reaction>
</comment>
<comment type="cofactor">
    <cofactor evidence="1">
        <name>Zn(2+)</name>
        <dbReference type="ChEBI" id="CHEBI:29105"/>
    </cofactor>
    <text evidence="1">Binds 1 zinc ion per subunit.</text>
</comment>
<comment type="subunit">
    <text evidence="1">Monomer.</text>
</comment>
<comment type="subcellular location">
    <subcellularLocation>
        <location evidence="1">Cytoplasm</location>
    </subcellularLocation>
</comment>
<comment type="similarity">
    <text evidence="1">Belongs to the class-I aminoacyl-tRNA synthetase family.</text>
</comment>
<sequence>MLKIYNSLTRQKEEFKPIVAGKVGMYVCGVTIYDLCHIGHGRTFVSFDVVARYLRYLGYDLTFVRNITDIDDKIIKRAAENAETCESLTERLIQEMYADFDALNIKRPDVEPRATAYIEEIIALVERLIERGFAYVADNGDVMFEVSQYSEYGKLSKQDLDQLQAGARVDIEAAKRSPLDFVLWKMSKPGEPTWESPWGSGRPGWHIECSAMNSSILGTHFDIHGGGSDLQFPHHENEIAQSCCAHDTQYVNTWMHSGMVMVDKEKMSKSLGNFFTIRDVLGHYDAETVRYFLMSGHYRSQLNYSEENLNQARASLERLYNALRGLDRSVPAAGGEEYVTRFTAAMNDDFNTPEAYSVLFDMAREINRLKSEDMTNASALGSLMRELADVIGILYQEPEAFFQGSAEDEDAAQIEALIKLRNDSRATKDWANADLARDKLNEMGIVLEDGPNGTTWRRK</sequence>
<name>SYC_VIBC3</name>
<dbReference type="EC" id="6.1.1.16" evidence="1"/>
<dbReference type="EMBL" id="CP000627">
    <property type="protein sequence ID" value="ABQ20125.1"/>
    <property type="molecule type" value="Genomic_DNA"/>
</dbReference>
<dbReference type="EMBL" id="CP001235">
    <property type="protein sequence ID" value="ACP09956.1"/>
    <property type="molecule type" value="Genomic_DNA"/>
</dbReference>
<dbReference type="RefSeq" id="WP_000913180.1">
    <property type="nucleotide sequence ID" value="NZ_JAACZH010000001.1"/>
</dbReference>
<dbReference type="SMR" id="A5F763"/>
<dbReference type="KEGG" id="vco:VC0395_A1439"/>
<dbReference type="KEGG" id="vcr:VC395_1963"/>
<dbReference type="PATRIC" id="fig|345073.21.peg.1895"/>
<dbReference type="eggNOG" id="COG0215">
    <property type="taxonomic scope" value="Bacteria"/>
</dbReference>
<dbReference type="HOGENOM" id="CLU_013528_0_1_6"/>
<dbReference type="OrthoDB" id="9815130at2"/>
<dbReference type="Proteomes" id="UP000000249">
    <property type="component" value="Chromosome 2"/>
</dbReference>
<dbReference type="GO" id="GO:0005829">
    <property type="term" value="C:cytosol"/>
    <property type="evidence" value="ECO:0007669"/>
    <property type="project" value="TreeGrafter"/>
</dbReference>
<dbReference type="GO" id="GO:0005524">
    <property type="term" value="F:ATP binding"/>
    <property type="evidence" value="ECO:0007669"/>
    <property type="project" value="UniProtKB-UniRule"/>
</dbReference>
<dbReference type="GO" id="GO:0004817">
    <property type="term" value="F:cysteine-tRNA ligase activity"/>
    <property type="evidence" value="ECO:0007669"/>
    <property type="project" value="UniProtKB-UniRule"/>
</dbReference>
<dbReference type="GO" id="GO:0008270">
    <property type="term" value="F:zinc ion binding"/>
    <property type="evidence" value="ECO:0007669"/>
    <property type="project" value="UniProtKB-UniRule"/>
</dbReference>
<dbReference type="GO" id="GO:0006423">
    <property type="term" value="P:cysteinyl-tRNA aminoacylation"/>
    <property type="evidence" value="ECO:0007669"/>
    <property type="project" value="UniProtKB-UniRule"/>
</dbReference>
<dbReference type="CDD" id="cd07963">
    <property type="entry name" value="Anticodon_Ia_Cys"/>
    <property type="match status" value="1"/>
</dbReference>
<dbReference type="CDD" id="cd00672">
    <property type="entry name" value="CysRS_core"/>
    <property type="match status" value="1"/>
</dbReference>
<dbReference type="FunFam" id="1.20.120.1910:FF:000001">
    <property type="entry name" value="Cysteine--tRNA ligase"/>
    <property type="match status" value="1"/>
</dbReference>
<dbReference type="FunFam" id="3.40.50.620:FF:000009">
    <property type="entry name" value="Cysteine--tRNA ligase"/>
    <property type="match status" value="1"/>
</dbReference>
<dbReference type="Gene3D" id="1.20.120.1910">
    <property type="entry name" value="Cysteine-tRNA ligase, C-terminal anti-codon recognition domain"/>
    <property type="match status" value="1"/>
</dbReference>
<dbReference type="Gene3D" id="3.40.50.620">
    <property type="entry name" value="HUPs"/>
    <property type="match status" value="1"/>
</dbReference>
<dbReference type="HAMAP" id="MF_00041">
    <property type="entry name" value="Cys_tRNA_synth"/>
    <property type="match status" value="1"/>
</dbReference>
<dbReference type="InterPro" id="IPR015803">
    <property type="entry name" value="Cys-tRNA-ligase"/>
</dbReference>
<dbReference type="InterPro" id="IPR015273">
    <property type="entry name" value="Cys-tRNA-synt_Ia_DALR"/>
</dbReference>
<dbReference type="InterPro" id="IPR024909">
    <property type="entry name" value="Cys-tRNA/MSH_ligase"/>
</dbReference>
<dbReference type="InterPro" id="IPR056411">
    <property type="entry name" value="CysS_C"/>
</dbReference>
<dbReference type="InterPro" id="IPR014729">
    <property type="entry name" value="Rossmann-like_a/b/a_fold"/>
</dbReference>
<dbReference type="InterPro" id="IPR032678">
    <property type="entry name" value="tRNA-synt_1_cat_dom"/>
</dbReference>
<dbReference type="InterPro" id="IPR009080">
    <property type="entry name" value="tRNAsynth_Ia_anticodon-bd"/>
</dbReference>
<dbReference type="NCBIfam" id="TIGR00435">
    <property type="entry name" value="cysS"/>
    <property type="match status" value="1"/>
</dbReference>
<dbReference type="PANTHER" id="PTHR10890:SF3">
    <property type="entry name" value="CYSTEINE--TRNA LIGASE, CYTOPLASMIC"/>
    <property type="match status" value="1"/>
</dbReference>
<dbReference type="PANTHER" id="PTHR10890">
    <property type="entry name" value="CYSTEINYL-TRNA SYNTHETASE"/>
    <property type="match status" value="1"/>
</dbReference>
<dbReference type="Pfam" id="PF23493">
    <property type="entry name" value="CysS_C"/>
    <property type="match status" value="1"/>
</dbReference>
<dbReference type="Pfam" id="PF09190">
    <property type="entry name" value="DALR_2"/>
    <property type="match status" value="1"/>
</dbReference>
<dbReference type="Pfam" id="PF01406">
    <property type="entry name" value="tRNA-synt_1e"/>
    <property type="match status" value="1"/>
</dbReference>
<dbReference type="PRINTS" id="PR00983">
    <property type="entry name" value="TRNASYNTHCYS"/>
</dbReference>
<dbReference type="SMART" id="SM00840">
    <property type="entry name" value="DALR_2"/>
    <property type="match status" value="1"/>
</dbReference>
<dbReference type="SUPFAM" id="SSF47323">
    <property type="entry name" value="Anticodon-binding domain of a subclass of class I aminoacyl-tRNA synthetases"/>
    <property type="match status" value="1"/>
</dbReference>
<dbReference type="SUPFAM" id="SSF52374">
    <property type="entry name" value="Nucleotidylyl transferase"/>
    <property type="match status" value="1"/>
</dbReference>